<protein>
    <recommendedName>
        <fullName>Phosphatidylinositol N-acetylglucosaminyltransferase GPI2 subunit</fullName>
        <ecNumber>2.4.1.198</ecNumber>
    </recommendedName>
</protein>
<organism>
    <name type="scientific">Schizosaccharomyces pombe (strain 972 / ATCC 24843)</name>
    <name type="common">Fission yeast</name>
    <dbReference type="NCBI Taxonomy" id="284812"/>
    <lineage>
        <taxon>Eukaryota</taxon>
        <taxon>Fungi</taxon>
        <taxon>Dikarya</taxon>
        <taxon>Ascomycota</taxon>
        <taxon>Taphrinomycotina</taxon>
        <taxon>Schizosaccharomycetes</taxon>
        <taxon>Schizosaccharomycetales</taxon>
        <taxon>Schizosaccharomycetaceae</taxon>
        <taxon>Schizosaccharomyces</taxon>
    </lineage>
</organism>
<dbReference type="EC" id="2.4.1.198"/>
<dbReference type="EMBL" id="CU329672">
    <property type="protein sequence ID" value="CAA19108.1"/>
    <property type="molecule type" value="Genomic_DNA"/>
</dbReference>
<dbReference type="PIR" id="T41379">
    <property type="entry name" value="T41379"/>
</dbReference>
<dbReference type="RefSeq" id="NP_588096.1">
    <property type="nucleotide sequence ID" value="NM_001023087.2"/>
</dbReference>
<dbReference type="BioGRID" id="275832">
    <property type="interactions" value="1"/>
</dbReference>
<dbReference type="ComplexPortal" id="CPX-10121">
    <property type="entry name" value="Glycosylphosphatidylinositol-N-acetylglucosaminyltransferase complex"/>
</dbReference>
<dbReference type="FunCoup" id="O59802">
    <property type="interactions" value="318"/>
</dbReference>
<dbReference type="STRING" id="284812.O59802"/>
<dbReference type="iPTMnet" id="O59802"/>
<dbReference type="PaxDb" id="4896-SPCC550.04c.1"/>
<dbReference type="EnsemblFungi" id="SPCC550.04c.1">
    <property type="protein sequence ID" value="SPCC550.04c.1:pep"/>
    <property type="gene ID" value="SPCC550.04c"/>
</dbReference>
<dbReference type="GeneID" id="2539262"/>
<dbReference type="KEGG" id="spo:2539262"/>
<dbReference type="PomBase" id="SPCC550.04c">
    <property type="gene designation" value="gpi2"/>
</dbReference>
<dbReference type="VEuPathDB" id="FungiDB:SPCC550.04c"/>
<dbReference type="eggNOG" id="KOG3059">
    <property type="taxonomic scope" value="Eukaryota"/>
</dbReference>
<dbReference type="HOGENOM" id="CLU_024002_2_0_1"/>
<dbReference type="InParanoid" id="O59802"/>
<dbReference type="OMA" id="STSYHAF"/>
<dbReference type="PhylomeDB" id="O59802"/>
<dbReference type="UniPathway" id="UPA00196"/>
<dbReference type="PRO" id="PR:O59802"/>
<dbReference type="Proteomes" id="UP000002485">
    <property type="component" value="Chromosome III"/>
</dbReference>
<dbReference type="GO" id="GO:0005783">
    <property type="term" value="C:endoplasmic reticulum"/>
    <property type="evidence" value="ECO:0007005"/>
    <property type="project" value="PomBase"/>
</dbReference>
<dbReference type="GO" id="GO:0000506">
    <property type="term" value="C:glycosylphosphatidylinositol-N-acetylglucosaminyltransferase (GPI-GnT) complex"/>
    <property type="evidence" value="ECO:0000318"/>
    <property type="project" value="GO_Central"/>
</dbReference>
<dbReference type="GO" id="GO:0017176">
    <property type="term" value="F:phosphatidylinositol N-acetylglucosaminyltransferase activity"/>
    <property type="evidence" value="ECO:0007669"/>
    <property type="project" value="UniProtKB-EC"/>
</dbReference>
<dbReference type="GO" id="GO:0006506">
    <property type="term" value="P:GPI anchor biosynthetic process"/>
    <property type="evidence" value="ECO:0000266"/>
    <property type="project" value="PomBase"/>
</dbReference>
<dbReference type="InterPro" id="IPR009450">
    <property type="entry name" value="Plno_GlcNAc_GPI2"/>
</dbReference>
<dbReference type="PANTHER" id="PTHR12982">
    <property type="entry name" value="PHOSPHATIDYLINOSITOL GLYCAN, CLASS C"/>
    <property type="match status" value="1"/>
</dbReference>
<dbReference type="PANTHER" id="PTHR12982:SF0">
    <property type="entry name" value="PHOSPHATIDYLINOSITOL N-ACETYLGLUCOSAMINYLTRANSFERASE SUBUNIT C"/>
    <property type="match status" value="1"/>
</dbReference>
<dbReference type="Pfam" id="PF06432">
    <property type="entry name" value="GPI2"/>
    <property type="match status" value="1"/>
</dbReference>
<dbReference type="PIRSF" id="PIRSF016104">
    <property type="entry name" value="GPI2"/>
    <property type="match status" value="1"/>
</dbReference>
<sequence>MDEVCAAPAPKKMVAKSLVLNTFRKASVKEVVELKKPWKKVLWRKQDYPDNFIDESFLNGLQRNVNIQVTDFWSLVADSLPVSQHLSSVVIFASVFVSIYRNQLSCALVGFVSNVSAVAAFILWDFVLRKPCNNRTFPNYMGIVKSCILIVLTLAGLSPILMSLTKSTSPDSVWAIAVWLFLANVFFHEYTTETIRPHVRLHNSLSTNAALSASVVLASRLEKSINVFFFILFAVHWFALFPIFRKYIHVFSFYADMLMTLVLIISAYIALNAVASVVIAFVFLSLIFFISFICPIWFIKLQRFKNEIHGPWDIALPKLGPSKG</sequence>
<gene>
    <name type="primary">gpi2</name>
    <name type="ORF">SPCC550.04c</name>
</gene>
<comment type="function">
    <text>Part of the complex catalyzing the transfer of N-acetylglucosamine from UDP-N-acetylglucosamine to phosphatidylinositol, the first step of GPI biosynthesis.</text>
</comment>
<comment type="catalytic activity">
    <reaction>
        <text>a 1,2-diacyl-sn-glycero-3-phospho-(1D-myo-inositol) + UDP-N-acetyl-alpha-D-glucosamine = a 6-(N-acetyl-alpha-D-glucosaminyl)-1-(1,2-diacyl-sn-glycero-3-phospho)-1D-myo-inositol + UDP + H(+)</text>
        <dbReference type="Rhea" id="RHEA:14789"/>
        <dbReference type="ChEBI" id="CHEBI:15378"/>
        <dbReference type="ChEBI" id="CHEBI:57265"/>
        <dbReference type="ChEBI" id="CHEBI:57705"/>
        <dbReference type="ChEBI" id="CHEBI:57880"/>
        <dbReference type="ChEBI" id="CHEBI:58223"/>
        <dbReference type="EC" id="2.4.1.198"/>
    </reaction>
</comment>
<comment type="pathway">
    <text>Glycolipid biosynthesis; glycosylphosphatidylinositol-anchor biosynthesis.</text>
</comment>
<comment type="subcellular location">
    <subcellularLocation>
        <location evidence="2">Endoplasmic reticulum membrane</location>
        <topology evidence="2">Multi-pass membrane protein</topology>
    </subcellularLocation>
</comment>
<comment type="similarity">
    <text evidence="3">Belongs to the PIGC family.</text>
</comment>
<name>GPI2_SCHPO</name>
<reference key="1">
    <citation type="journal article" date="2002" name="Nature">
        <title>The genome sequence of Schizosaccharomyces pombe.</title>
        <authorList>
            <person name="Wood V."/>
            <person name="Gwilliam R."/>
            <person name="Rajandream M.A."/>
            <person name="Lyne M.H."/>
            <person name="Lyne R."/>
            <person name="Stewart A."/>
            <person name="Sgouros J.G."/>
            <person name="Peat N."/>
            <person name="Hayles J."/>
            <person name="Baker S.G."/>
            <person name="Basham D."/>
            <person name="Bowman S."/>
            <person name="Brooks K."/>
            <person name="Brown D."/>
            <person name="Brown S."/>
            <person name="Chillingworth T."/>
            <person name="Churcher C.M."/>
            <person name="Collins M."/>
            <person name="Connor R."/>
            <person name="Cronin A."/>
            <person name="Davis P."/>
            <person name="Feltwell T."/>
            <person name="Fraser A."/>
            <person name="Gentles S."/>
            <person name="Goble A."/>
            <person name="Hamlin N."/>
            <person name="Harris D.E."/>
            <person name="Hidalgo J."/>
            <person name="Hodgson G."/>
            <person name="Holroyd S."/>
            <person name="Hornsby T."/>
            <person name="Howarth S."/>
            <person name="Huckle E.J."/>
            <person name="Hunt S."/>
            <person name="Jagels K."/>
            <person name="James K.D."/>
            <person name="Jones L."/>
            <person name="Jones M."/>
            <person name="Leather S."/>
            <person name="McDonald S."/>
            <person name="McLean J."/>
            <person name="Mooney P."/>
            <person name="Moule S."/>
            <person name="Mungall K.L."/>
            <person name="Murphy L.D."/>
            <person name="Niblett D."/>
            <person name="Odell C."/>
            <person name="Oliver K."/>
            <person name="O'Neil S."/>
            <person name="Pearson D."/>
            <person name="Quail M.A."/>
            <person name="Rabbinowitsch E."/>
            <person name="Rutherford K.M."/>
            <person name="Rutter S."/>
            <person name="Saunders D."/>
            <person name="Seeger K."/>
            <person name="Sharp S."/>
            <person name="Skelton J."/>
            <person name="Simmonds M.N."/>
            <person name="Squares R."/>
            <person name="Squares S."/>
            <person name="Stevens K."/>
            <person name="Taylor K."/>
            <person name="Taylor R.G."/>
            <person name="Tivey A."/>
            <person name="Walsh S.V."/>
            <person name="Warren T."/>
            <person name="Whitehead S."/>
            <person name="Woodward J.R."/>
            <person name="Volckaert G."/>
            <person name="Aert R."/>
            <person name="Robben J."/>
            <person name="Grymonprez B."/>
            <person name="Weltjens I."/>
            <person name="Vanstreels E."/>
            <person name="Rieger M."/>
            <person name="Schaefer M."/>
            <person name="Mueller-Auer S."/>
            <person name="Gabel C."/>
            <person name="Fuchs M."/>
            <person name="Duesterhoeft A."/>
            <person name="Fritzc C."/>
            <person name="Holzer E."/>
            <person name="Moestl D."/>
            <person name="Hilbert H."/>
            <person name="Borzym K."/>
            <person name="Langer I."/>
            <person name="Beck A."/>
            <person name="Lehrach H."/>
            <person name="Reinhardt R."/>
            <person name="Pohl T.M."/>
            <person name="Eger P."/>
            <person name="Zimmermann W."/>
            <person name="Wedler H."/>
            <person name="Wambutt R."/>
            <person name="Purnelle B."/>
            <person name="Goffeau A."/>
            <person name="Cadieu E."/>
            <person name="Dreano S."/>
            <person name="Gloux S."/>
            <person name="Lelaure V."/>
            <person name="Mottier S."/>
            <person name="Galibert F."/>
            <person name="Aves S.J."/>
            <person name="Xiang Z."/>
            <person name="Hunt C."/>
            <person name="Moore K."/>
            <person name="Hurst S.M."/>
            <person name="Lucas M."/>
            <person name="Rochet M."/>
            <person name="Gaillardin C."/>
            <person name="Tallada V.A."/>
            <person name="Garzon A."/>
            <person name="Thode G."/>
            <person name="Daga R.R."/>
            <person name="Cruzado L."/>
            <person name="Jimenez J."/>
            <person name="Sanchez M."/>
            <person name="del Rey F."/>
            <person name="Benito J."/>
            <person name="Dominguez A."/>
            <person name="Revuelta J.L."/>
            <person name="Moreno S."/>
            <person name="Armstrong J."/>
            <person name="Forsburg S.L."/>
            <person name="Cerutti L."/>
            <person name="Lowe T."/>
            <person name="McCombie W.R."/>
            <person name="Paulsen I."/>
            <person name="Potashkin J."/>
            <person name="Shpakovski G.V."/>
            <person name="Ussery D."/>
            <person name="Barrell B.G."/>
            <person name="Nurse P."/>
        </authorList>
    </citation>
    <scope>NUCLEOTIDE SEQUENCE [LARGE SCALE GENOMIC DNA]</scope>
    <source>
        <strain>972 / ATCC 24843</strain>
    </source>
</reference>
<reference key="2">
    <citation type="journal article" date="2006" name="Nat. Biotechnol.">
        <title>ORFeome cloning and global analysis of protein localization in the fission yeast Schizosaccharomyces pombe.</title>
        <authorList>
            <person name="Matsuyama A."/>
            <person name="Arai R."/>
            <person name="Yashiroda Y."/>
            <person name="Shirai A."/>
            <person name="Kamata A."/>
            <person name="Sekido S."/>
            <person name="Kobayashi Y."/>
            <person name="Hashimoto A."/>
            <person name="Hamamoto M."/>
            <person name="Hiraoka Y."/>
            <person name="Horinouchi S."/>
            <person name="Yoshida M."/>
        </authorList>
    </citation>
    <scope>SUBCELLULAR LOCATION [LARGE SCALE ANALYSIS]</scope>
</reference>
<keyword id="KW-0256">Endoplasmic reticulum</keyword>
<keyword id="KW-0328">Glycosyltransferase</keyword>
<keyword id="KW-0337">GPI-anchor biosynthesis</keyword>
<keyword id="KW-0472">Membrane</keyword>
<keyword id="KW-1185">Reference proteome</keyword>
<keyword id="KW-0808">Transferase</keyword>
<keyword id="KW-0812">Transmembrane</keyword>
<keyword id="KW-1133">Transmembrane helix</keyword>
<feature type="chain" id="PRO_0000372382" description="Phosphatidylinositol N-acetylglucosaminyltransferase GPI2 subunit">
    <location>
        <begin position="1"/>
        <end position="324"/>
    </location>
</feature>
<feature type="topological domain" description="Cytoplasmic" evidence="1">
    <location>
        <begin position="1"/>
        <end position="79"/>
    </location>
</feature>
<feature type="transmembrane region" description="Helical" evidence="1">
    <location>
        <begin position="80"/>
        <end position="100"/>
    </location>
</feature>
<feature type="topological domain" description="Lumenal" evidence="1">
    <location>
        <begin position="101"/>
        <end position="107"/>
    </location>
</feature>
<feature type="transmembrane region" description="Helical" evidence="1">
    <location>
        <begin position="108"/>
        <end position="128"/>
    </location>
</feature>
<feature type="topological domain" description="Cytoplasmic" evidence="1">
    <location>
        <begin position="129"/>
        <end position="140"/>
    </location>
</feature>
<feature type="transmembrane region" description="Helical" evidence="1">
    <location>
        <begin position="141"/>
        <end position="161"/>
    </location>
</feature>
<feature type="topological domain" description="Lumenal" evidence="1">
    <location>
        <begin position="162"/>
        <end position="171"/>
    </location>
</feature>
<feature type="transmembrane region" description="Helical" evidence="1">
    <location>
        <begin position="172"/>
        <end position="192"/>
    </location>
</feature>
<feature type="topological domain" description="Cytoplasmic" evidence="1">
    <location>
        <begin position="193"/>
        <end position="223"/>
    </location>
</feature>
<feature type="transmembrane region" description="Helical" evidence="1">
    <location>
        <begin position="224"/>
        <end position="244"/>
    </location>
</feature>
<feature type="topological domain" description="Lumenal" evidence="1">
    <location>
        <begin position="245"/>
        <end position="250"/>
    </location>
</feature>
<feature type="transmembrane region" description="Helical" evidence="1">
    <location>
        <begin position="251"/>
        <end position="271"/>
    </location>
</feature>
<feature type="topological domain" description="Cytoplasmic" evidence="1">
    <location>
        <begin position="272"/>
        <end position="276"/>
    </location>
</feature>
<feature type="transmembrane region" description="Helical" evidence="1">
    <location>
        <begin position="277"/>
        <end position="299"/>
    </location>
</feature>
<feature type="topological domain" description="Lumenal" evidence="1">
    <location>
        <begin position="300"/>
        <end position="324"/>
    </location>
</feature>
<proteinExistence type="inferred from homology"/>
<evidence type="ECO:0000255" key="1"/>
<evidence type="ECO:0000269" key="2">
    <source>
    </source>
</evidence>
<evidence type="ECO:0000305" key="3"/>
<accession>O59802</accession>